<protein>
    <recommendedName>
        <fullName evidence="1">Shikimate dehydrogenase (NADP(+))</fullName>
        <shortName evidence="1">SDH</shortName>
        <ecNumber evidence="1">1.1.1.25</ecNumber>
    </recommendedName>
</protein>
<comment type="function">
    <text evidence="1">Involved in the biosynthesis of the chorismate, which leads to the biosynthesis of aromatic amino acids. Catalyzes the reversible NADPH linked reduction of 3-dehydroshikimate (DHSA) to yield shikimate (SA).</text>
</comment>
<comment type="catalytic activity">
    <reaction evidence="1">
        <text>shikimate + NADP(+) = 3-dehydroshikimate + NADPH + H(+)</text>
        <dbReference type="Rhea" id="RHEA:17737"/>
        <dbReference type="ChEBI" id="CHEBI:15378"/>
        <dbReference type="ChEBI" id="CHEBI:16630"/>
        <dbReference type="ChEBI" id="CHEBI:36208"/>
        <dbReference type="ChEBI" id="CHEBI:57783"/>
        <dbReference type="ChEBI" id="CHEBI:58349"/>
        <dbReference type="EC" id="1.1.1.25"/>
    </reaction>
</comment>
<comment type="pathway">
    <text evidence="1">Metabolic intermediate biosynthesis; chorismate biosynthesis; chorismate from D-erythrose 4-phosphate and phosphoenolpyruvate: step 4/7.</text>
</comment>
<comment type="subunit">
    <text evidence="1">Homodimer.</text>
</comment>
<comment type="similarity">
    <text evidence="1">Belongs to the shikimate dehydrogenase family.</text>
</comment>
<keyword id="KW-0028">Amino-acid biosynthesis</keyword>
<keyword id="KW-0057">Aromatic amino acid biosynthesis</keyword>
<keyword id="KW-0521">NADP</keyword>
<keyword id="KW-0560">Oxidoreductase</keyword>
<dbReference type="EC" id="1.1.1.25" evidence="1"/>
<dbReference type="EMBL" id="CP000247">
    <property type="protein sequence ID" value="ABG71349.1"/>
    <property type="molecule type" value="Genomic_DNA"/>
</dbReference>
<dbReference type="RefSeq" id="WP_000451224.1">
    <property type="nucleotide sequence ID" value="NC_008253.1"/>
</dbReference>
<dbReference type="SMR" id="Q0TCI0"/>
<dbReference type="KEGG" id="ecp:ECP_3369"/>
<dbReference type="HOGENOM" id="CLU_044063_2_1_6"/>
<dbReference type="UniPathway" id="UPA00053">
    <property type="reaction ID" value="UER00087"/>
</dbReference>
<dbReference type="Proteomes" id="UP000009182">
    <property type="component" value="Chromosome"/>
</dbReference>
<dbReference type="GO" id="GO:0005829">
    <property type="term" value="C:cytosol"/>
    <property type="evidence" value="ECO:0007669"/>
    <property type="project" value="TreeGrafter"/>
</dbReference>
<dbReference type="GO" id="GO:0050661">
    <property type="term" value="F:NADP binding"/>
    <property type="evidence" value="ECO:0007669"/>
    <property type="project" value="InterPro"/>
</dbReference>
<dbReference type="GO" id="GO:0004764">
    <property type="term" value="F:shikimate 3-dehydrogenase (NADP+) activity"/>
    <property type="evidence" value="ECO:0007669"/>
    <property type="project" value="UniProtKB-UniRule"/>
</dbReference>
<dbReference type="GO" id="GO:0008652">
    <property type="term" value="P:amino acid biosynthetic process"/>
    <property type="evidence" value="ECO:0007669"/>
    <property type="project" value="UniProtKB-KW"/>
</dbReference>
<dbReference type="GO" id="GO:0009073">
    <property type="term" value="P:aromatic amino acid family biosynthetic process"/>
    <property type="evidence" value="ECO:0007669"/>
    <property type="project" value="UniProtKB-KW"/>
</dbReference>
<dbReference type="GO" id="GO:0009423">
    <property type="term" value="P:chorismate biosynthetic process"/>
    <property type="evidence" value="ECO:0007669"/>
    <property type="project" value="UniProtKB-UniRule"/>
</dbReference>
<dbReference type="GO" id="GO:0019632">
    <property type="term" value="P:shikimate metabolic process"/>
    <property type="evidence" value="ECO:0007669"/>
    <property type="project" value="InterPro"/>
</dbReference>
<dbReference type="CDD" id="cd01065">
    <property type="entry name" value="NAD_bind_Shikimate_DH"/>
    <property type="match status" value="1"/>
</dbReference>
<dbReference type="FunFam" id="3.40.50.10860:FF:000006">
    <property type="entry name" value="Shikimate dehydrogenase (NADP(+))"/>
    <property type="match status" value="1"/>
</dbReference>
<dbReference type="FunFam" id="3.40.50.720:FF:000104">
    <property type="entry name" value="Shikimate dehydrogenase (NADP(+))"/>
    <property type="match status" value="1"/>
</dbReference>
<dbReference type="Gene3D" id="3.40.50.10860">
    <property type="entry name" value="Leucine Dehydrogenase, chain A, domain 1"/>
    <property type="match status" value="1"/>
</dbReference>
<dbReference type="Gene3D" id="3.40.50.720">
    <property type="entry name" value="NAD(P)-binding Rossmann-like Domain"/>
    <property type="match status" value="1"/>
</dbReference>
<dbReference type="HAMAP" id="MF_00222">
    <property type="entry name" value="Shikimate_DH_AroE"/>
    <property type="match status" value="1"/>
</dbReference>
<dbReference type="InterPro" id="IPR046346">
    <property type="entry name" value="Aminoacid_DH-like_N_sf"/>
</dbReference>
<dbReference type="InterPro" id="IPR036291">
    <property type="entry name" value="NAD(P)-bd_dom_sf"/>
</dbReference>
<dbReference type="InterPro" id="IPR041121">
    <property type="entry name" value="SDH_C"/>
</dbReference>
<dbReference type="InterPro" id="IPR011342">
    <property type="entry name" value="Shikimate_DH"/>
</dbReference>
<dbReference type="InterPro" id="IPR013708">
    <property type="entry name" value="Shikimate_DH-bd_N"/>
</dbReference>
<dbReference type="InterPro" id="IPR022893">
    <property type="entry name" value="Shikimate_DH_fam"/>
</dbReference>
<dbReference type="InterPro" id="IPR006151">
    <property type="entry name" value="Shikm_DH/Glu-tRNA_Rdtase"/>
</dbReference>
<dbReference type="NCBIfam" id="TIGR00507">
    <property type="entry name" value="aroE"/>
    <property type="match status" value="1"/>
</dbReference>
<dbReference type="NCBIfam" id="NF001310">
    <property type="entry name" value="PRK00258.1-2"/>
    <property type="match status" value="1"/>
</dbReference>
<dbReference type="PANTHER" id="PTHR21089:SF1">
    <property type="entry name" value="BIFUNCTIONAL 3-DEHYDROQUINATE DEHYDRATASE_SHIKIMATE DEHYDROGENASE, CHLOROPLASTIC"/>
    <property type="match status" value="1"/>
</dbReference>
<dbReference type="PANTHER" id="PTHR21089">
    <property type="entry name" value="SHIKIMATE DEHYDROGENASE"/>
    <property type="match status" value="1"/>
</dbReference>
<dbReference type="Pfam" id="PF18317">
    <property type="entry name" value="SDH_C"/>
    <property type="match status" value="1"/>
</dbReference>
<dbReference type="Pfam" id="PF01488">
    <property type="entry name" value="Shikimate_DH"/>
    <property type="match status" value="1"/>
</dbReference>
<dbReference type="Pfam" id="PF08501">
    <property type="entry name" value="Shikimate_dh_N"/>
    <property type="match status" value="1"/>
</dbReference>
<dbReference type="SUPFAM" id="SSF53223">
    <property type="entry name" value="Aminoacid dehydrogenase-like, N-terminal domain"/>
    <property type="match status" value="1"/>
</dbReference>
<dbReference type="SUPFAM" id="SSF51735">
    <property type="entry name" value="NAD(P)-binding Rossmann-fold domains"/>
    <property type="match status" value="1"/>
</dbReference>
<feature type="chain" id="PRO_1000021282" description="Shikimate dehydrogenase (NADP(+))">
    <location>
        <begin position="1"/>
        <end position="272"/>
    </location>
</feature>
<feature type="active site" description="Proton acceptor" evidence="1">
    <location>
        <position position="65"/>
    </location>
</feature>
<feature type="binding site" evidence="1">
    <location>
        <begin position="14"/>
        <end position="16"/>
    </location>
    <ligand>
        <name>shikimate</name>
        <dbReference type="ChEBI" id="CHEBI:36208"/>
    </ligand>
</feature>
<feature type="binding site" evidence="1">
    <location>
        <position position="61"/>
    </location>
    <ligand>
        <name>shikimate</name>
        <dbReference type="ChEBI" id="CHEBI:36208"/>
    </ligand>
</feature>
<feature type="binding site" evidence="1">
    <location>
        <position position="77"/>
    </location>
    <ligand>
        <name>NADP(+)</name>
        <dbReference type="ChEBI" id="CHEBI:58349"/>
    </ligand>
</feature>
<feature type="binding site" evidence="1">
    <location>
        <position position="86"/>
    </location>
    <ligand>
        <name>shikimate</name>
        <dbReference type="ChEBI" id="CHEBI:36208"/>
    </ligand>
</feature>
<feature type="binding site" evidence="1">
    <location>
        <position position="102"/>
    </location>
    <ligand>
        <name>shikimate</name>
        <dbReference type="ChEBI" id="CHEBI:36208"/>
    </ligand>
</feature>
<feature type="binding site" evidence="1">
    <location>
        <begin position="126"/>
        <end position="130"/>
    </location>
    <ligand>
        <name>NADP(+)</name>
        <dbReference type="ChEBI" id="CHEBI:58349"/>
    </ligand>
</feature>
<feature type="binding site" evidence="1">
    <location>
        <begin position="149"/>
        <end position="154"/>
    </location>
    <ligand>
        <name>NADP(+)</name>
        <dbReference type="ChEBI" id="CHEBI:58349"/>
    </ligand>
</feature>
<feature type="binding site" evidence="1">
    <location>
        <position position="213"/>
    </location>
    <ligand>
        <name>NADP(+)</name>
        <dbReference type="ChEBI" id="CHEBI:58349"/>
    </ligand>
</feature>
<feature type="binding site" evidence="1">
    <location>
        <position position="215"/>
    </location>
    <ligand>
        <name>shikimate</name>
        <dbReference type="ChEBI" id="CHEBI:36208"/>
    </ligand>
</feature>
<feature type="binding site" evidence="1">
    <location>
        <position position="237"/>
    </location>
    <ligand>
        <name>NADP(+)</name>
        <dbReference type="ChEBI" id="CHEBI:58349"/>
    </ligand>
</feature>
<organism>
    <name type="scientific">Escherichia coli O6:K15:H31 (strain 536 / UPEC)</name>
    <dbReference type="NCBI Taxonomy" id="362663"/>
    <lineage>
        <taxon>Bacteria</taxon>
        <taxon>Pseudomonadati</taxon>
        <taxon>Pseudomonadota</taxon>
        <taxon>Gammaproteobacteria</taxon>
        <taxon>Enterobacterales</taxon>
        <taxon>Enterobacteriaceae</taxon>
        <taxon>Escherichia</taxon>
    </lineage>
</organism>
<name>AROE_ECOL5</name>
<evidence type="ECO:0000255" key="1">
    <source>
        <dbReference type="HAMAP-Rule" id="MF_00222"/>
    </source>
</evidence>
<reference key="1">
    <citation type="journal article" date="2006" name="Mol. Microbiol.">
        <title>Role of pathogenicity island-associated integrases in the genome plasticity of uropathogenic Escherichia coli strain 536.</title>
        <authorList>
            <person name="Hochhut B."/>
            <person name="Wilde C."/>
            <person name="Balling G."/>
            <person name="Middendorf B."/>
            <person name="Dobrindt U."/>
            <person name="Brzuszkiewicz E."/>
            <person name="Gottschalk G."/>
            <person name="Carniel E."/>
            <person name="Hacker J."/>
        </authorList>
    </citation>
    <scope>NUCLEOTIDE SEQUENCE [LARGE SCALE GENOMIC DNA]</scope>
    <source>
        <strain>536 / UPEC</strain>
    </source>
</reference>
<accession>Q0TCI0</accession>
<proteinExistence type="inferred from homology"/>
<gene>
    <name evidence="1" type="primary">aroE</name>
    <name type="ordered locus">ECP_3369</name>
</gene>
<sequence>METYAVFGNPIAHSKSPFIHQQFAQQLNIEHPYGRVLAPINDFINTLNAFFSAGGKGANVTVPFKEEAFARADELTERAALAGAVNTLKRLEDGRLLGDNTDGIGLLSDLERLSFIRPGLRILLIGAGGASRGVLLPLLSLDCAVTITNRTVSRAEELAKLFAHTGSIHALGMDELEGHEFDLIINATSSGISGDIPAIPSSLIHPGIYCYDMFYQKGKTPFLAWCEQRGSKRTADGLGMLVAQAAHAFLLWHGVLPDVEPVIKLLQQELSA</sequence>